<dbReference type="EC" id="3.1.1.29" evidence="1"/>
<dbReference type="EMBL" id="CP000753">
    <property type="protein sequence ID" value="ABS09427.1"/>
    <property type="molecule type" value="Genomic_DNA"/>
</dbReference>
<dbReference type="RefSeq" id="WP_006082736.1">
    <property type="nucleotide sequence ID" value="NC_009665.1"/>
</dbReference>
<dbReference type="SMR" id="A6WRI8"/>
<dbReference type="GeneID" id="11773484"/>
<dbReference type="KEGG" id="sbm:Shew185_3300"/>
<dbReference type="HOGENOM" id="CLU_062456_3_1_6"/>
<dbReference type="GO" id="GO:0005737">
    <property type="term" value="C:cytoplasm"/>
    <property type="evidence" value="ECO:0007669"/>
    <property type="project" value="UniProtKB-SubCell"/>
</dbReference>
<dbReference type="GO" id="GO:0004045">
    <property type="term" value="F:peptidyl-tRNA hydrolase activity"/>
    <property type="evidence" value="ECO:0007669"/>
    <property type="project" value="UniProtKB-UniRule"/>
</dbReference>
<dbReference type="GO" id="GO:0000049">
    <property type="term" value="F:tRNA binding"/>
    <property type="evidence" value="ECO:0007669"/>
    <property type="project" value="UniProtKB-UniRule"/>
</dbReference>
<dbReference type="GO" id="GO:0006515">
    <property type="term" value="P:protein quality control for misfolded or incompletely synthesized proteins"/>
    <property type="evidence" value="ECO:0007669"/>
    <property type="project" value="UniProtKB-UniRule"/>
</dbReference>
<dbReference type="GO" id="GO:0072344">
    <property type="term" value="P:rescue of stalled ribosome"/>
    <property type="evidence" value="ECO:0007669"/>
    <property type="project" value="UniProtKB-UniRule"/>
</dbReference>
<dbReference type="CDD" id="cd00462">
    <property type="entry name" value="PTH"/>
    <property type="match status" value="1"/>
</dbReference>
<dbReference type="FunFam" id="3.40.50.1470:FF:000001">
    <property type="entry name" value="Peptidyl-tRNA hydrolase"/>
    <property type="match status" value="1"/>
</dbReference>
<dbReference type="Gene3D" id="3.40.50.1470">
    <property type="entry name" value="Peptidyl-tRNA hydrolase"/>
    <property type="match status" value="1"/>
</dbReference>
<dbReference type="HAMAP" id="MF_00083">
    <property type="entry name" value="Pept_tRNA_hydro_bact"/>
    <property type="match status" value="1"/>
</dbReference>
<dbReference type="InterPro" id="IPR001328">
    <property type="entry name" value="Pept_tRNA_hydro"/>
</dbReference>
<dbReference type="InterPro" id="IPR018171">
    <property type="entry name" value="Pept_tRNA_hydro_CS"/>
</dbReference>
<dbReference type="InterPro" id="IPR036416">
    <property type="entry name" value="Pept_tRNA_hydro_sf"/>
</dbReference>
<dbReference type="NCBIfam" id="TIGR00447">
    <property type="entry name" value="pth"/>
    <property type="match status" value="1"/>
</dbReference>
<dbReference type="PANTHER" id="PTHR17224">
    <property type="entry name" value="PEPTIDYL-TRNA HYDROLASE"/>
    <property type="match status" value="1"/>
</dbReference>
<dbReference type="PANTHER" id="PTHR17224:SF1">
    <property type="entry name" value="PEPTIDYL-TRNA HYDROLASE"/>
    <property type="match status" value="1"/>
</dbReference>
<dbReference type="Pfam" id="PF01195">
    <property type="entry name" value="Pept_tRNA_hydro"/>
    <property type="match status" value="1"/>
</dbReference>
<dbReference type="SUPFAM" id="SSF53178">
    <property type="entry name" value="Peptidyl-tRNA hydrolase-like"/>
    <property type="match status" value="1"/>
</dbReference>
<dbReference type="PROSITE" id="PS01196">
    <property type="entry name" value="PEPT_TRNA_HYDROL_2"/>
    <property type="match status" value="1"/>
</dbReference>
<sequence length="195" mass="21185">MSEIKLIVGLANPGAEYAHTRHNAGAWYVLELARICGVTLVADSKYFGLTARAVLHGKDVRLLIPTTYMNLSGKAVGALANFFRITPEEILVAHDELDLPPGVAKFKLGGGHGGHNGLKDIIAKLANDKNFYRLRLGIGHPGDKNQVSGYVLGKAPAKEQELIDAAIDEAVRSTEILFKQDMVKAMNRLHSFKAE</sequence>
<proteinExistence type="inferred from homology"/>
<organism>
    <name type="scientific">Shewanella baltica (strain OS185)</name>
    <dbReference type="NCBI Taxonomy" id="402882"/>
    <lineage>
        <taxon>Bacteria</taxon>
        <taxon>Pseudomonadati</taxon>
        <taxon>Pseudomonadota</taxon>
        <taxon>Gammaproteobacteria</taxon>
        <taxon>Alteromonadales</taxon>
        <taxon>Shewanellaceae</taxon>
        <taxon>Shewanella</taxon>
    </lineage>
</organism>
<protein>
    <recommendedName>
        <fullName evidence="1">Peptidyl-tRNA hydrolase</fullName>
        <shortName evidence="1">Pth</shortName>
        <ecNumber evidence="1">3.1.1.29</ecNumber>
    </recommendedName>
</protein>
<accession>A6WRI8</accession>
<evidence type="ECO:0000255" key="1">
    <source>
        <dbReference type="HAMAP-Rule" id="MF_00083"/>
    </source>
</evidence>
<comment type="function">
    <text evidence="1">Hydrolyzes ribosome-free peptidyl-tRNAs (with 1 or more amino acids incorporated), which drop off the ribosome during protein synthesis, or as a result of ribosome stalling.</text>
</comment>
<comment type="function">
    <text evidence="1">Catalyzes the release of premature peptidyl moieties from peptidyl-tRNA molecules trapped in stalled 50S ribosomal subunits, and thus maintains levels of free tRNAs and 50S ribosomes.</text>
</comment>
<comment type="catalytic activity">
    <reaction evidence="1">
        <text>an N-acyl-L-alpha-aminoacyl-tRNA + H2O = an N-acyl-L-amino acid + a tRNA + H(+)</text>
        <dbReference type="Rhea" id="RHEA:54448"/>
        <dbReference type="Rhea" id="RHEA-COMP:10123"/>
        <dbReference type="Rhea" id="RHEA-COMP:13883"/>
        <dbReference type="ChEBI" id="CHEBI:15377"/>
        <dbReference type="ChEBI" id="CHEBI:15378"/>
        <dbReference type="ChEBI" id="CHEBI:59874"/>
        <dbReference type="ChEBI" id="CHEBI:78442"/>
        <dbReference type="ChEBI" id="CHEBI:138191"/>
        <dbReference type="EC" id="3.1.1.29"/>
    </reaction>
</comment>
<comment type="subunit">
    <text evidence="1">Monomer.</text>
</comment>
<comment type="subcellular location">
    <subcellularLocation>
        <location evidence="1">Cytoplasm</location>
    </subcellularLocation>
</comment>
<comment type="similarity">
    <text evidence="1">Belongs to the PTH family.</text>
</comment>
<name>PTH_SHEB8</name>
<gene>
    <name evidence="1" type="primary">pth</name>
    <name type="ordered locus">Shew185_3300</name>
</gene>
<feature type="chain" id="PRO_1000010648" description="Peptidyl-tRNA hydrolase">
    <location>
        <begin position="1"/>
        <end position="195"/>
    </location>
</feature>
<feature type="active site" description="Proton acceptor" evidence="1">
    <location>
        <position position="22"/>
    </location>
</feature>
<feature type="binding site" evidence="1">
    <location>
        <position position="17"/>
    </location>
    <ligand>
        <name>tRNA</name>
        <dbReference type="ChEBI" id="CHEBI:17843"/>
    </ligand>
</feature>
<feature type="binding site" evidence="1">
    <location>
        <position position="68"/>
    </location>
    <ligand>
        <name>tRNA</name>
        <dbReference type="ChEBI" id="CHEBI:17843"/>
    </ligand>
</feature>
<feature type="binding site" evidence="1">
    <location>
        <position position="70"/>
    </location>
    <ligand>
        <name>tRNA</name>
        <dbReference type="ChEBI" id="CHEBI:17843"/>
    </ligand>
</feature>
<feature type="binding site" evidence="1">
    <location>
        <position position="116"/>
    </location>
    <ligand>
        <name>tRNA</name>
        <dbReference type="ChEBI" id="CHEBI:17843"/>
    </ligand>
</feature>
<feature type="site" description="Discriminates between blocked and unblocked aminoacyl-tRNA" evidence="1">
    <location>
        <position position="12"/>
    </location>
</feature>
<feature type="site" description="Stabilizes the basic form of H active site to accept a proton" evidence="1">
    <location>
        <position position="95"/>
    </location>
</feature>
<keyword id="KW-0963">Cytoplasm</keyword>
<keyword id="KW-0378">Hydrolase</keyword>
<keyword id="KW-0694">RNA-binding</keyword>
<keyword id="KW-0820">tRNA-binding</keyword>
<reference key="1">
    <citation type="submission" date="2007-07" db="EMBL/GenBank/DDBJ databases">
        <title>Complete sequence of chromosome of Shewanella baltica OS185.</title>
        <authorList>
            <consortium name="US DOE Joint Genome Institute"/>
            <person name="Copeland A."/>
            <person name="Lucas S."/>
            <person name="Lapidus A."/>
            <person name="Barry K."/>
            <person name="Glavina del Rio T."/>
            <person name="Dalin E."/>
            <person name="Tice H."/>
            <person name="Pitluck S."/>
            <person name="Sims D."/>
            <person name="Brettin T."/>
            <person name="Bruce D."/>
            <person name="Detter J.C."/>
            <person name="Han C."/>
            <person name="Schmutz J."/>
            <person name="Larimer F."/>
            <person name="Land M."/>
            <person name="Hauser L."/>
            <person name="Kyrpides N."/>
            <person name="Mikhailova N."/>
            <person name="Brettar I."/>
            <person name="Rodrigues J."/>
            <person name="Konstantinidis K."/>
            <person name="Tiedje J."/>
            <person name="Richardson P."/>
        </authorList>
    </citation>
    <scope>NUCLEOTIDE SEQUENCE [LARGE SCALE GENOMIC DNA]</scope>
    <source>
        <strain>OS185</strain>
    </source>
</reference>